<evidence type="ECO:0000255" key="1"/>
<evidence type="ECO:0000269" key="2">
    <source>
    </source>
</evidence>
<evidence type="ECO:0000303" key="3">
    <source>
    </source>
</evidence>
<evidence type="ECO:0000305" key="4"/>
<evidence type="ECO:0000305" key="5">
    <source>
    </source>
</evidence>
<evidence type="ECO:0000312" key="6">
    <source>
        <dbReference type="EMBL" id="AME17663.1"/>
    </source>
</evidence>
<feature type="signal peptide" evidence="1">
    <location>
        <begin position="1"/>
        <end position="18"/>
    </location>
</feature>
<feature type="propeptide" id="PRO_0000450996" evidence="4">
    <location>
        <begin position="19"/>
        <end position="26"/>
    </location>
</feature>
<feature type="chain" id="PRO_5007179751" description="Conotoxin Im22.1" evidence="4">
    <location>
        <begin position="27"/>
        <end position="83"/>
    </location>
</feature>
<proteinExistence type="evidence at protein level"/>
<name>CEM1_CONIM</name>
<protein>
    <recommendedName>
        <fullName evidence="4">Conotoxin Im22.1</fullName>
    </recommendedName>
    <alternativeName>
        <fullName evidence="3 6">Conopeptide im005</fullName>
    </alternativeName>
</protein>
<sequence>MMMRVFIAMFFLLALVEAGWPRLYDKNCKKNILRTYCSNKICGEATKNTNGELQCTMYCRCANGCFRGQYIDWPNQQTNLLFC</sequence>
<reference key="1">
    <citation type="journal article" date="2019" name="Mar. Drugs">
        <title>Transcriptomic-proteomic correlation in the predation-evoked venom of the cone snail, Conus imperialis.</title>
        <authorList>
            <person name="Jin A.H."/>
            <person name="Dutertre S."/>
            <person name="Dutt M."/>
            <person name="Lavergne V."/>
            <person name="Jones A."/>
            <person name="Lewis R.J."/>
            <person name="Alewood P.F."/>
        </authorList>
    </citation>
    <scope>NUCLEOTIDE SEQUENCE [MRNA]</scope>
    <scope>IDENTIFICATION BY MASS SPECTROMETRY</scope>
    <scope>SUBCELLULAR LOCATION</scope>
    <source>
        <tissue>Venom</tissue>
        <tissue>Venom duct</tissue>
    </source>
</reference>
<organism>
    <name type="scientific">Conus imperialis</name>
    <name type="common">Imperial cone</name>
    <dbReference type="NCBI Taxonomy" id="35631"/>
    <lineage>
        <taxon>Eukaryota</taxon>
        <taxon>Metazoa</taxon>
        <taxon>Spiralia</taxon>
        <taxon>Lophotrochozoa</taxon>
        <taxon>Mollusca</taxon>
        <taxon>Gastropoda</taxon>
        <taxon>Caenogastropoda</taxon>
        <taxon>Neogastropoda</taxon>
        <taxon>Conoidea</taxon>
        <taxon>Conidae</taxon>
        <taxon>Conus</taxon>
        <taxon>Stephanoconus</taxon>
    </lineage>
</organism>
<keyword id="KW-1015">Disulfide bond</keyword>
<keyword id="KW-0528">Neurotoxin</keyword>
<keyword id="KW-0964">Secreted</keyword>
<keyword id="KW-0732">Signal</keyword>
<keyword id="KW-0800">Toxin</keyword>
<dbReference type="EMBL" id="KT377399">
    <property type="protein sequence ID" value="AME17663.1"/>
    <property type="molecule type" value="mRNA"/>
</dbReference>
<dbReference type="GO" id="GO:0005576">
    <property type="term" value="C:extracellular region"/>
    <property type="evidence" value="ECO:0007669"/>
    <property type="project" value="UniProtKB-SubCell"/>
</dbReference>
<dbReference type="GO" id="GO:0090729">
    <property type="term" value="F:toxin activity"/>
    <property type="evidence" value="ECO:0007669"/>
    <property type="project" value="UniProtKB-KW"/>
</dbReference>
<comment type="function">
    <text evidence="4">Probable neurotoxin.</text>
</comment>
<comment type="subcellular location">
    <subcellularLocation>
        <location evidence="2">Secreted</location>
    </subcellularLocation>
</comment>
<comment type="tissue specificity">
    <text evidence="5">Expressed by the venom duct.</text>
</comment>
<comment type="domain">
    <text evidence="4">The cysteine framework is XXII (C-C-C-C-C-C-C-C).</text>
</comment>
<comment type="PTM">
    <text evidence="4">Contain 4 disulfide bonds.</text>
</comment>
<comment type="similarity">
    <text evidence="4">Belongs to the conotoxin E superfamily.</text>
</comment>
<accession>A0A125S9D9</accession>